<dbReference type="EC" id="3.4.24.-"/>
<dbReference type="EMBL" id="BA000033">
    <property type="protein sequence ID" value="BAB95010.1"/>
    <property type="molecule type" value="Genomic_DNA"/>
</dbReference>
<dbReference type="SMR" id="Q8NWZ4"/>
<dbReference type="KEGG" id="sam:MW1145"/>
<dbReference type="HOGENOM" id="CLU_025778_1_0_9"/>
<dbReference type="GO" id="GO:0005886">
    <property type="term" value="C:plasma membrane"/>
    <property type="evidence" value="ECO:0007669"/>
    <property type="project" value="UniProtKB-SubCell"/>
</dbReference>
<dbReference type="GO" id="GO:0046872">
    <property type="term" value="F:metal ion binding"/>
    <property type="evidence" value="ECO:0007669"/>
    <property type="project" value="UniProtKB-KW"/>
</dbReference>
<dbReference type="GO" id="GO:0004222">
    <property type="term" value="F:metalloendopeptidase activity"/>
    <property type="evidence" value="ECO:0007669"/>
    <property type="project" value="InterPro"/>
</dbReference>
<dbReference type="GO" id="GO:0006508">
    <property type="term" value="P:proteolysis"/>
    <property type="evidence" value="ECO:0007669"/>
    <property type="project" value="UniProtKB-KW"/>
</dbReference>
<dbReference type="CDD" id="cd23081">
    <property type="entry name" value="cpPDZ_EcRseP-like"/>
    <property type="match status" value="1"/>
</dbReference>
<dbReference type="CDD" id="cd06163">
    <property type="entry name" value="S2P-M50_PDZ_RseP-like"/>
    <property type="match status" value="1"/>
</dbReference>
<dbReference type="Gene3D" id="2.30.42.10">
    <property type="match status" value="1"/>
</dbReference>
<dbReference type="InterPro" id="IPR001478">
    <property type="entry name" value="PDZ"/>
</dbReference>
<dbReference type="InterPro" id="IPR036034">
    <property type="entry name" value="PDZ_sf"/>
</dbReference>
<dbReference type="InterPro" id="IPR004387">
    <property type="entry name" value="Pept_M50_Zn"/>
</dbReference>
<dbReference type="InterPro" id="IPR008915">
    <property type="entry name" value="Peptidase_M50"/>
</dbReference>
<dbReference type="NCBIfam" id="TIGR00054">
    <property type="entry name" value="RIP metalloprotease RseP"/>
    <property type="match status" value="1"/>
</dbReference>
<dbReference type="PANTHER" id="PTHR42837:SF2">
    <property type="entry name" value="MEMBRANE METALLOPROTEASE ARASP2, CHLOROPLASTIC-RELATED"/>
    <property type="match status" value="1"/>
</dbReference>
<dbReference type="PANTHER" id="PTHR42837">
    <property type="entry name" value="REGULATOR OF SIGMA-E PROTEASE RSEP"/>
    <property type="match status" value="1"/>
</dbReference>
<dbReference type="Pfam" id="PF13180">
    <property type="entry name" value="PDZ_2"/>
    <property type="match status" value="1"/>
</dbReference>
<dbReference type="Pfam" id="PF02163">
    <property type="entry name" value="Peptidase_M50"/>
    <property type="match status" value="1"/>
</dbReference>
<dbReference type="SUPFAM" id="SSF50156">
    <property type="entry name" value="PDZ domain-like"/>
    <property type="match status" value="1"/>
</dbReference>
<dbReference type="PROSITE" id="PS00142">
    <property type="entry name" value="ZINC_PROTEASE"/>
    <property type="match status" value="1"/>
</dbReference>
<feature type="chain" id="PRO_0000088464" description="Putative zinc metalloprotease MW1145">
    <location>
        <begin position="1"/>
        <end position="428"/>
    </location>
</feature>
<feature type="transmembrane region" description="Helical" evidence="1">
    <location>
        <begin position="172"/>
        <end position="194"/>
    </location>
</feature>
<feature type="transmembrane region" description="Helical" evidence="1">
    <location>
        <begin position="309"/>
        <end position="331"/>
    </location>
</feature>
<feature type="transmembrane region" description="Helical" evidence="1">
    <location>
        <begin position="352"/>
        <end position="374"/>
    </location>
</feature>
<feature type="transmembrane region" description="Helical" evidence="1">
    <location>
        <begin position="401"/>
        <end position="420"/>
    </location>
</feature>
<feature type="domain" description="PDZ">
    <location>
        <begin position="186"/>
        <end position="269"/>
    </location>
</feature>
<feature type="active site" evidence="2">
    <location>
        <position position="22"/>
    </location>
</feature>
<feature type="binding site" evidence="2">
    <location>
        <position position="21"/>
    </location>
    <ligand>
        <name>Zn(2+)</name>
        <dbReference type="ChEBI" id="CHEBI:29105"/>
        <note>catalytic</note>
    </ligand>
</feature>
<feature type="binding site" evidence="2">
    <location>
        <position position="25"/>
    </location>
    <ligand>
        <name>Zn(2+)</name>
        <dbReference type="ChEBI" id="CHEBI:29105"/>
        <note>catalytic</note>
    </ligand>
</feature>
<keyword id="KW-1003">Cell membrane</keyword>
<keyword id="KW-0378">Hydrolase</keyword>
<keyword id="KW-0472">Membrane</keyword>
<keyword id="KW-0479">Metal-binding</keyword>
<keyword id="KW-0482">Metalloprotease</keyword>
<keyword id="KW-0645">Protease</keyword>
<keyword id="KW-0812">Transmembrane</keyword>
<keyword id="KW-1133">Transmembrane helix</keyword>
<keyword id="KW-0862">Zinc</keyword>
<evidence type="ECO:0000255" key="1"/>
<evidence type="ECO:0000255" key="2">
    <source>
        <dbReference type="PROSITE-ProRule" id="PRU10095"/>
    </source>
</evidence>
<evidence type="ECO:0000305" key="3"/>
<accession>Q8NWZ4</accession>
<gene>
    <name type="ordered locus">MW1145</name>
</gene>
<organism>
    <name type="scientific">Staphylococcus aureus (strain MW2)</name>
    <dbReference type="NCBI Taxonomy" id="196620"/>
    <lineage>
        <taxon>Bacteria</taxon>
        <taxon>Bacillati</taxon>
        <taxon>Bacillota</taxon>
        <taxon>Bacilli</taxon>
        <taxon>Bacillales</taxon>
        <taxon>Staphylococcaceae</taxon>
        <taxon>Staphylococcus</taxon>
    </lineage>
</organism>
<protein>
    <recommendedName>
        <fullName>Putative zinc metalloprotease MW1145</fullName>
        <ecNumber>3.4.24.-</ecNumber>
    </recommendedName>
</protein>
<reference key="1">
    <citation type="journal article" date="2002" name="Lancet">
        <title>Genome and virulence determinants of high virulence community-acquired MRSA.</title>
        <authorList>
            <person name="Baba T."/>
            <person name="Takeuchi F."/>
            <person name="Kuroda M."/>
            <person name="Yuzawa H."/>
            <person name="Aoki K."/>
            <person name="Oguchi A."/>
            <person name="Nagai Y."/>
            <person name="Iwama N."/>
            <person name="Asano K."/>
            <person name="Naimi T."/>
            <person name="Kuroda H."/>
            <person name="Cui L."/>
            <person name="Yamamoto K."/>
            <person name="Hiramatsu K."/>
        </authorList>
    </citation>
    <scope>NUCLEOTIDE SEQUENCE [LARGE SCALE GENOMIC DNA]</scope>
    <source>
        <strain>MW2</strain>
    </source>
</reference>
<sequence>MSYLVTIIAFIIVFGVLVTVHEYGHMFFAKRAGIMCPEFAIGMGPKIFSFRKNETLYTIRLLPVGGYVRMAGDGLEEPPVEPGMNVKIKLNEENEITHIILDDHHKFQQIEAIEVKKCDFKDDLFIEGITAYDNERHHFKIARKSFFVENGSLVQIAPRDRQFAHKKPWPKFLTLFAGPLFNFILALVLFIGLAYYQGTPTSTVEQVADKYPAQQAGLQKGDKIVQIGKYKISEFDDVDKALDKVKDNKTTVKFERDGKTKSVELTPKKTERKLTKVSSETKYVLGFQPASERTLFKPIVYGFESFLKGSTLIFTAVVGMLASIFTGGFSFDMLNGPVGIYHNVDSVVKAGIISLIGYTALLSVNLGIMNLIPIPALDGGRILFVIYEAIFRKPVNKKAETTIIAIGAIFMVVIMILVTWNDIRRYFL</sequence>
<comment type="cofactor">
    <cofactor evidence="3">
        <name>Zn(2+)</name>
        <dbReference type="ChEBI" id="CHEBI:29105"/>
    </cofactor>
</comment>
<comment type="subcellular location">
    <subcellularLocation>
        <location evidence="3">Cell membrane</location>
        <topology evidence="3">Multi-pass membrane protein</topology>
    </subcellularLocation>
</comment>
<comment type="similarity">
    <text evidence="3">Belongs to the peptidase M50B family.</text>
</comment>
<proteinExistence type="inferred from homology"/>
<name>Y1145_STAAW</name>